<proteinExistence type="inferred from homology"/>
<accession>Q5LWX7</accession>
<reference key="1">
    <citation type="journal article" date="2004" name="Nature">
        <title>Genome sequence of Silicibacter pomeroyi reveals adaptations to the marine environment.</title>
        <authorList>
            <person name="Moran M.A."/>
            <person name="Buchan A."/>
            <person name="Gonzalez J.M."/>
            <person name="Heidelberg J.F."/>
            <person name="Whitman W.B."/>
            <person name="Kiene R.P."/>
            <person name="Henriksen J.R."/>
            <person name="King G.M."/>
            <person name="Belas R."/>
            <person name="Fuqua C."/>
            <person name="Brinkac L.M."/>
            <person name="Lewis M."/>
            <person name="Johri S."/>
            <person name="Weaver B."/>
            <person name="Pai G."/>
            <person name="Eisen J.A."/>
            <person name="Rahe E."/>
            <person name="Sheldon W.M."/>
            <person name="Ye W."/>
            <person name="Miller T.R."/>
            <person name="Carlton J."/>
            <person name="Rasko D.A."/>
            <person name="Paulsen I.T."/>
            <person name="Ren Q."/>
            <person name="Daugherty S.C."/>
            <person name="DeBoy R.T."/>
            <person name="Dodson R.J."/>
            <person name="Durkin A.S."/>
            <person name="Madupu R."/>
            <person name="Nelson W.C."/>
            <person name="Sullivan S.A."/>
            <person name="Rosovitz M.J."/>
            <person name="Haft D.H."/>
            <person name="Selengut J."/>
            <person name="Ward N."/>
        </authorList>
    </citation>
    <scope>NUCLEOTIDE SEQUENCE [LARGE SCALE GENOMIC DNA]</scope>
    <source>
        <strain>ATCC 700808 / DSM 15171 / DSS-3</strain>
    </source>
</reference>
<reference key="2">
    <citation type="journal article" date="2014" name="Stand. Genomic Sci.">
        <title>An updated genome annotation for the model marine bacterium Ruegeria pomeroyi DSS-3.</title>
        <authorList>
            <person name="Rivers A.R."/>
            <person name="Smith C.B."/>
            <person name="Moran M.A."/>
        </authorList>
    </citation>
    <scope>GENOME REANNOTATION</scope>
    <source>
        <strain>ATCC 700808 / DSM 15171 / DSS-3</strain>
    </source>
</reference>
<name>FLGH_RUEPO</name>
<comment type="function">
    <text evidence="1">Assembles around the rod to form the L-ring and probably protects the motor/basal body from shearing forces during rotation.</text>
</comment>
<comment type="subunit">
    <text evidence="1">The basal body constitutes a major portion of the flagellar organelle and consists of four rings (L,P,S, and M) mounted on a central rod.</text>
</comment>
<comment type="subcellular location">
    <subcellularLocation>
        <location evidence="1">Cell outer membrane</location>
        <topology evidence="1">Lipid-anchor</topology>
    </subcellularLocation>
    <subcellularLocation>
        <location evidence="1">Bacterial flagellum basal body</location>
    </subcellularLocation>
</comment>
<comment type="similarity">
    <text evidence="1">Belongs to the FlgH family.</text>
</comment>
<dbReference type="EMBL" id="CP000031">
    <property type="protein sequence ID" value="AAV93501.1"/>
    <property type="molecule type" value="Genomic_DNA"/>
</dbReference>
<dbReference type="RefSeq" id="WP_011045944.1">
    <property type="nucleotide sequence ID" value="NC_003911.12"/>
</dbReference>
<dbReference type="SMR" id="Q5LWX7"/>
<dbReference type="STRING" id="246200.SPO0175"/>
<dbReference type="PaxDb" id="246200-SPO0175"/>
<dbReference type="KEGG" id="sil:SPO0175"/>
<dbReference type="eggNOG" id="COG2063">
    <property type="taxonomic scope" value="Bacteria"/>
</dbReference>
<dbReference type="HOGENOM" id="CLU_069313_1_2_5"/>
<dbReference type="OrthoDB" id="9789227at2"/>
<dbReference type="Proteomes" id="UP000001023">
    <property type="component" value="Chromosome"/>
</dbReference>
<dbReference type="GO" id="GO:0009427">
    <property type="term" value="C:bacterial-type flagellum basal body, distal rod, L ring"/>
    <property type="evidence" value="ECO:0007669"/>
    <property type="project" value="InterPro"/>
</dbReference>
<dbReference type="GO" id="GO:0009279">
    <property type="term" value="C:cell outer membrane"/>
    <property type="evidence" value="ECO:0007669"/>
    <property type="project" value="UniProtKB-SubCell"/>
</dbReference>
<dbReference type="GO" id="GO:0003774">
    <property type="term" value="F:cytoskeletal motor activity"/>
    <property type="evidence" value="ECO:0007669"/>
    <property type="project" value="InterPro"/>
</dbReference>
<dbReference type="GO" id="GO:0071973">
    <property type="term" value="P:bacterial-type flagellum-dependent cell motility"/>
    <property type="evidence" value="ECO:0007669"/>
    <property type="project" value="InterPro"/>
</dbReference>
<dbReference type="HAMAP" id="MF_00415">
    <property type="entry name" value="FlgH"/>
    <property type="match status" value="1"/>
</dbReference>
<dbReference type="InterPro" id="IPR000527">
    <property type="entry name" value="Flag_Lring"/>
</dbReference>
<dbReference type="NCBIfam" id="NF001305">
    <property type="entry name" value="PRK00249.1-5"/>
    <property type="match status" value="1"/>
</dbReference>
<dbReference type="PANTHER" id="PTHR34933">
    <property type="entry name" value="FLAGELLAR L-RING PROTEIN"/>
    <property type="match status" value="1"/>
</dbReference>
<dbReference type="PANTHER" id="PTHR34933:SF1">
    <property type="entry name" value="FLAGELLAR L-RING PROTEIN"/>
    <property type="match status" value="1"/>
</dbReference>
<dbReference type="Pfam" id="PF02107">
    <property type="entry name" value="FlgH"/>
    <property type="match status" value="1"/>
</dbReference>
<dbReference type="PRINTS" id="PR01008">
    <property type="entry name" value="FLGLRINGFLGH"/>
</dbReference>
<dbReference type="PROSITE" id="PS51257">
    <property type="entry name" value="PROKAR_LIPOPROTEIN"/>
    <property type="match status" value="1"/>
</dbReference>
<sequence length="246" mass="26569">MMQKCLSPKTLIAALVVLSACGRADHLGKAPSFTPNTESPEHVAMLWPGLPLHTQPQRSVDRASLWSGGQNSLLGDQRAMKKGDILTVVIEIDEKAEISNDTNRSRSGSESLGVPHLLGLPQRIDEKLPEGASMSNAVAVDSSSASGGKGSVKRKEKLTLRVAATVVDVLPNGVLSITGSQELRVNFELRELLVSGYVRPEDISRQNEITYDKIASARVSYGGRGQITDVQQPRYGQQVLDMVLPF</sequence>
<protein>
    <recommendedName>
        <fullName evidence="1">Flagellar L-ring protein</fullName>
    </recommendedName>
    <alternativeName>
        <fullName evidence="1">Basal body L-ring protein</fullName>
    </alternativeName>
</protein>
<evidence type="ECO:0000255" key="1">
    <source>
        <dbReference type="HAMAP-Rule" id="MF_00415"/>
    </source>
</evidence>
<organism>
    <name type="scientific">Ruegeria pomeroyi (strain ATCC 700808 / DSM 15171 / DSS-3)</name>
    <name type="common">Silicibacter pomeroyi</name>
    <dbReference type="NCBI Taxonomy" id="246200"/>
    <lineage>
        <taxon>Bacteria</taxon>
        <taxon>Pseudomonadati</taxon>
        <taxon>Pseudomonadota</taxon>
        <taxon>Alphaproteobacteria</taxon>
        <taxon>Rhodobacterales</taxon>
        <taxon>Roseobacteraceae</taxon>
        <taxon>Ruegeria</taxon>
    </lineage>
</organism>
<keyword id="KW-0975">Bacterial flagellum</keyword>
<keyword id="KW-0998">Cell outer membrane</keyword>
<keyword id="KW-0449">Lipoprotein</keyword>
<keyword id="KW-0472">Membrane</keyword>
<keyword id="KW-0564">Palmitate</keyword>
<keyword id="KW-1185">Reference proteome</keyword>
<keyword id="KW-0732">Signal</keyword>
<gene>
    <name evidence="1" type="primary">flgH</name>
    <name type="ordered locus">SPO0175</name>
</gene>
<feature type="signal peptide" evidence="1">
    <location>
        <begin position="1"/>
        <end position="20"/>
    </location>
</feature>
<feature type="chain" id="PRO_0000009474" description="Flagellar L-ring protein">
    <location>
        <begin position="21"/>
        <end position="246"/>
    </location>
</feature>
<feature type="lipid moiety-binding region" description="N-palmitoyl cysteine" evidence="1">
    <location>
        <position position="21"/>
    </location>
</feature>
<feature type="lipid moiety-binding region" description="S-diacylglycerol cysteine" evidence="1">
    <location>
        <position position="21"/>
    </location>
</feature>